<feature type="chain" id="PRO_0000154224" description="Indole-3-glycerol phosphate synthase">
    <location>
        <begin position="1"/>
        <end position="260"/>
    </location>
</feature>
<keyword id="KW-0028">Amino-acid biosynthesis</keyword>
<keyword id="KW-0057">Aromatic amino acid biosynthesis</keyword>
<keyword id="KW-0210">Decarboxylase</keyword>
<keyword id="KW-0456">Lyase</keyword>
<keyword id="KW-0822">Tryptophan biosynthesis</keyword>
<gene>
    <name type="primary">trpC</name>
</gene>
<name>TRPC_LACCA</name>
<proteinExistence type="inferred from homology"/>
<sequence length="260" mass="28944">MILDDLVAVTKIRLARHQRQQSLADLKQTVAKMPRNHKPDFLIRLKQPGLHVIAEVKKASPSKGTIVTDFPYLAIAKAYDQAGADAISVLTEPDYFNGHLHYLKEISQQVSVPTLRKDFTIDPYMIYEAKANGAVIILLIVAILTDQQLRDYRQLAEKLGMHAIVEAYTAAEVTRALQSGAKIIGINNRNLKDFRVDFTNSLKLRAMVPDNIPVVAESGIKTQEDVEKLAAAGFNAILIGETLMRSNQKKQLIAAFKERA</sequence>
<accession>P17217</accession>
<comment type="catalytic activity">
    <reaction>
        <text>1-(2-carboxyphenylamino)-1-deoxy-D-ribulose 5-phosphate + H(+) = (1S,2R)-1-C-(indol-3-yl)glycerol 3-phosphate + CO2 + H2O</text>
        <dbReference type="Rhea" id="RHEA:23476"/>
        <dbReference type="ChEBI" id="CHEBI:15377"/>
        <dbReference type="ChEBI" id="CHEBI:15378"/>
        <dbReference type="ChEBI" id="CHEBI:16526"/>
        <dbReference type="ChEBI" id="CHEBI:58613"/>
        <dbReference type="ChEBI" id="CHEBI:58866"/>
        <dbReference type="EC" id="4.1.1.48"/>
    </reaction>
</comment>
<comment type="pathway">
    <text>Amino-acid biosynthesis; L-tryptophan biosynthesis; L-tryptophan from chorismate: step 4/5.</text>
</comment>
<comment type="similarity">
    <text evidence="1">Belongs to the TrpC family.</text>
</comment>
<dbReference type="EC" id="4.1.1.48"/>
<dbReference type="EMBL" id="D00496">
    <property type="protein sequence ID" value="BAA00384.1"/>
    <property type="molecule type" value="Genomic_DNA"/>
</dbReference>
<dbReference type="PIR" id="S42344">
    <property type="entry name" value="JS0341"/>
</dbReference>
<dbReference type="SMR" id="P17217"/>
<dbReference type="eggNOG" id="COG0134">
    <property type="taxonomic scope" value="Bacteria"/>
</dbReference>
<dbReference type="UniPathway" id="UPA00035">
    <property type="reaction ID" value="UER00043"/>
</dbReference>
<dbReference type="GO" id="GO:0004425">
    <property type="term" value="F:indole-3-glycerol-phosphate synthase activity"/>
    <property type="evidence" value="ECO:0007669"/>
    <property type="project" value="UniProtKB-UniRule"/>
</dbReference>
<dbReference type="GO" id="GO:0004640">
    <property type="term" value="F:phosphoribosylanthranilate isomerase activity"/>
    <property type="evidence" value="ECO:0007669"/>
    <property type="project" value="TreeGrafter"/>
</dbReference>
<dbReference type="GO" id="GO:0000162">
    <property type="term" value="P:L-tryptophan biosynthetic process"/>
    <property type="evidence" value="ECO:0007669"/>
    <property type="project" value="UniProtKB-UniRule"/>
</dbReference>
<dbReference type="CDD" id="cd00331">
    <property type="entry name" value="IGPS"/>
    <property type="match status" value="1"/>
</dbReference>
<dbReference type="FunFam" id="3.20.20.70:FF:000024">
    <property type="entry name" value="Indole-3-glycerol phosphate synthase"/>
    <property type="match status" value="1"/>
</dbReference>
<dbReference type="Gene3D" id="3.20.20.70">
    <property type="entry name" value="Aldolase class I"/>
    <property type="match status" value="1"/>
</dbReference>
<dbReference type="HAMAP" id="MF_00134_B">
    <property type="entry name" value="IGPS_B"/>
    <property type="match status" value="1"/>
</dbReference>
<dbReference type="InterPro" id="IPR013785">
    <property type="entry name" value="Aldolase_TIM"/>
</dbReference>
<dbReference type="InterPro" id="IPR045186">
    <property type="entry name" value="Indole-3-glycerol_P_synth"/>
</dbReference>
<dbReference type="InterPro" id="IPR013798">
    <property type="entry name" value="Indole-3-glycerol_P_synth_dom"/>
</dbReference>
<dbReference type="InterPro" id="IPR001468">
    <property type="entry name" value="Indole-3-GlycerolPSynthase_CS"/>
</dbReference>
<dbReference type="InterPro" id="IPR011060">
    <property type="entry name" value="RibuloseP-bd_barrel"/>
</dbReference>
<dbReference type="NCBIfam" id="NF001377">
    <property type="entry name" value="PRK00278.2-4"/>
    <property type="match status" value="1"/>
</dbReference>
<dbReference type="PANTHER" id="PTHR22854:SF2">
    <property type="entry name" value="INDOLE-3-GLYCEROL-PHOSPHATE SYNTHASE"/>
    <property type="match status" value="1"/>
</dbReference>
<dbReference type="PANTHER" id="PTHR22854">
    <property type="entry name" value="TRYPTOPHAN BIOSYNTHESIS PROTEIN"/>
    <property type="match status" value="1"/>
</dbReference>
<dbReference type="Pfam" id="PF00218">
    <property type="entry name" value="IGPS"/>
    <property type="match status" value="1"/>
</dbReference>
<dbReference type="SUPFAM" id="SSF51366">
    <property type="entry name" value="Ribulose-phoshate binding barrel"/>
    <property type="match status" value="1"/>
</dbReference>
<dbReference type="PROSITE" id="PS00614">
    <property type="entry name" value="IGPS"/>
    <property type="match status" value="1"/>
</dbReference>
<organism>
    <name type="scientific">Lacticaseibacillus casei</name>
    <name type="common">Lactobacillus casei</name>
    <dbReference type="NCBI Taxonomy" id="1582"/>
    <lineage>
        <taxon>Bacteria</taxon>
        <taxon>Bacillati</taxon>
        <taxon>Bacillota</taxon>
        <taxon>Bacilli</taxon>
        <taxon>Lactobacillales</taxon>
        <taxon>Lactobacillaceae</taxon>
        <taxon>Lacticaseibacillus</taxon>
    </lineage>
</organism>
<reference key="1">
    <citation type="journal article" date="1990" name="J. Biochem.">
        <title>Nucleotide sequences and genomic constitution of five tryptophan genes of Lactobacillus casei.</title>
        <authorList>
            <person name="Natori Y."/>
            <person name="Kano Y."/>
            <person name="Imamoto F."/>
        </authorList>
    </citation>
    <scope>NUCLEOTIDE SEQUENCE [GENOMIC DNA]</scope>
</reference>
<protein>
    <recommendedName>
        <fullName>Indole-3-glycerol phosphate synthase</fullName>
        <shortName>IGPS</shortName>
        <ecNumber>4.1.1.48</ecNumber>
    </recommendedName>
</protein>
<evidence type="ECO:0000305" key="1"/>